<sequence>MKTTQLIATVLTCSFLYIQPARAQFVVSDPATEAETLATALATAENLTQTIAMVTMLTSAYGVTGLLTSLNQKNQYPSTKDLDNEMFSPRMPMSTTARAITSDTDRAVVGSDAEADLLRSQITGSANSAGIAADNLETMDKRLTANADTSAQLSRSRNIMQATVTNGLLLKQIHDAMIQNVQATNLLTMATAQAGLHEAEEAAAQRKEHQKTAVIFGALP</sequence>
<organism>
    <name type="scientific">Rhizobium radiobacter</name>
    <name type="common">Agrobacterium tumefaciens</name>
    <name type="synonym">Agrobacterium radiobacter</name>
    <dbReference type="NCBI Taxonomy" id="358"/>
    <lineage>
        <taxon>Bacteria</taxon>
        <taxon>Pseudomonadati</taxon>
        <taxon>Pseudomonadota</taxon>
        <taxon>Alphaproteobacteria</taxon>
        <taxon>Hyphomicrobiales</taxon>
        <taxon>Rhizobiaceae</taxon>
        <taxon>Rhizobium/Agrobacterium group</taxon>
        <taxon>Agrobacterium</taxon>
        <taxon>Agrobacterium tumefaciens complex</taxon>
    </lineage>
</organism>
<name>VIRB5_RHIRD</name>
<gene>
    <name type="primary">virB5</name>
</gene>
<geneLocation type="plasmid">
    <name>pTiA6</name>
</geneLocation>
<dbReference type="EMBL" id="J03216">
    <property type="protein sequence ID" value="AAA88650.1"/>
    <property type="molecule type" value="Genomic_DNA"/>
</dbReference>
<dbReference type="PIR" id="S00782">
    <property type="entry name" value="B6AG55"/>
</dbReference>
<dbReference type="RefSeq" id="NP_059803.1">
    <property type="nucleotide sequence ID" value="NC_002377.1"/>
</dbReference>
<dbReference type="RefSeq" id="WP_010892491.1">
    <property type="nucleotide sequence ID" value="NZ_QSNU01000012.1"/>
</dbReference>
<dbReference type="TCDB" id="3.A.7.1.1">
    <property type="family name" value="the type iv (conjugal dna-protein transfer or virb) secretory pathway (ivsp) family"/>
</dbReference>
<dbReference type="OrthoDB" id="8071245at2"/>
<dbReference type="NCBIfam" id="NF010434">
    <property type="entry name" value="PRK13860.1"/>
    <property type="match status" value="1"/>
</dbReference>
<evidence type="ECO:0000255" key="1"/>
<evidence type="ECO:0000305" key="2"/>
<proteinExistence type="inferred from homology"/>
<feature type="signal peptide" evidence="1">
    <location>
        <begin position="1"/>
        <end position="23"/>
    </location>
</feature>
<feature type="chain" id="PRO_0000022668" description="Protein virB5">
    <location>
        <begin position="24"/>
        <end position="220"/>
    </location>
</feature>
<keyword id="KW-0192">Crown gall tumor</keyword>
<keyword id="KW-0614">Plasmid</keyword>
<keyword id="KW-0732">Signal</keyword>
<protein>
    <recommendedName>
        <fullName>Protein virB5</fullName>
    </recommendedName>
</protein>
<accession>P0A3W2</accession>
<accession>P05355</accession>
<accession>P09778</accession>
<reference key="1">
    <citation type="journal article" date="1988" name="J. Biol. Chem.">
        <title>Characterization of the virB operon from an Agrobacterium tumefaciens Ti plasmid.</title>
        <authorList>
            <person name="Ward J.E."/>
            <person name="Akiyoshi D.E."/>
            <person name="Regier D."/>
            <person name="Datta A."/>
            <person name="Gordon M.P."/>
            <person name="Nester E.W."/>
        </authorList>
    </citation>
    <scope>NUCLEOTIDE SEQUENCE [GENOMIC DNA]</scope>
</reference>
<reference key="2">
    <citation type="journal article" date="1990" name="J. Biol. Chem.">
        <authorList>
            <person name="Ward J.E."/>
            <person name="Akiyoshi D.E."/>
            <person name="Regier D."/>
            <person name="Datta A."/>
            <person name="Gordon M.P."/>
            <person name="Nester E.W."/>
        </authorList>
    </citation>
    <scope>ERRATUM OF PUBMED:3281947</scope>
    <scope>SEQUENCE REVISION</scope>
</reference>
<comment type="function">
    <text>VirB proteins are suggested to act at the bacterial surface and there play an important role in directing T-DNA transfer to plant cells.</text>
</comment>
<comment type="similarity">
    <text evidence="2">Belongs to the virb5 family.</text>
</comment>